<reference key="1">
    <citation type="submission" date="2007-06" db="EMBL/GenBank/DDBJ databases">
        <title>Complete sequence of Clostridium beijerinckii NCIMB 8052.</title>
        <authorList>
            <consortium name="US DOE Joint Genome Institute"/>
            <person name="Copeland A."/>
            <person name="Lucas S."/>
            <person name="Lapidus A."/>
            <person name="Barry K."/>
            <person name="Detter J.C."/>
            <person name="Glavina del Rio T."/>
            <person name="Hammon N."/>
            <person name="Israni S."/>
            <person name="Dalin E."/>
            <person name="Tice H."/>
            <person name="Pitluck S."/>
            <person name="Sims D."/>
            <person name="Brettin T."/>
            <person name="Bruce D."/>
            <person name="Tapia R."/>
            <person name="Brainard J."/>
            <person name="Schmutz J."/>
            <person name="Larimer F."/>
            <person name="Land M."/>
            <person name="Hauser L."/>
            <person name="Kyrpides N."/>
            <person name="Mikhailova N."/>
            <person name="Bennet G."/>
            <person name="Cann I."/>
            <person name="Chen J.-S."/>
            <person name="Contreras A.L."/>
            <person name="Jones D."/>
            <person name="Kashket E."/>
            <person name="Mitchell W."/>
            <person name="Stoddard S."/>
            <person name="Schwarz W."/>
            <person name="Qureshi N."/>
            <person name="Young M."/>
            <person name="Shi Z."/>
            <person name="Ezeji T."/>
            <person name="White B."/>
            <person name="Blaschek H."/>
            <person name="Richardson P."/>
        </authorList>
    </citation>
    <scope>NUCLEOTIDE SEQUENCE [LARGE SCALE GENOMIC DNA]</scope>
    <source>
        <strain>ATCC 51743 / NCIMB 8052</strain>
    </source>
</reference>
<keyword id="KW-0067">ATP-binding</keyword>
<keyword id="KW-1003">Cell membrane</keyword>
<keyword id="KW-0963">Cytoplasm</keyword>
<keyword id="KW-0472">Membrane</keyword>
<keyword id="KW-0479">Metal-binding</keyword>
<keyword id="KW-0547">Nucleotide-binding</keyword>
<keyword id="KW-0653">Protein transport</keyword>
<keyword id="KW-1278">Translocase</keyword>
<keyword id="KW-0811">Translocation</keyword>
<keyword id="KW-0813">Transport</keyword>
<keyword id="KW-0862">Zinc</keyword>
<organism>
    <name type="scientific">Clostridium beijerinckii (strain ATCC 51743 / NCIMB 8052)</name>
    <name type="common">Clostridium acetobutylicum</name>
    <dbReference type="NCBI Taxonomy" id="290402"/>
    <lineage>
        <taxon>Bacteria</taxon>
        <taxon>Bacillati</taxon>
        <taxon>Bacillota</taxon>
        <taxon>Clostridia</taxon>
        <taxon>Eubacteriales</taxon>
        <taxon>Clostridiaceae</taxon>
        <taxon>Clostridium</taxon>
    </lineage>
</organism>
<name>SECA_CLOB8</name>
<sequence length="855" mass="95800">MGLLNAVFGTYSEREVKRLKPTIQKINDLDEELQKLSDEELKAKTPAFKERLANGETLDDILPEAFAVVREASKRVLGMKHYDEQLMGGMILHQGRISEMKTGEGKTLVATLPAYLNGLSGNGVHIVTVNDYLAKRDAEQMGELYGFLGLTTGVIVHELNNDQRRESYASDITYGTNNEFGFDYLRDNMVIYKEERVQRPLNFAIVDEVDSILIDEARTPLIISGQGEKSTEFYKVADYFAKKLVVEKDFTRDEKANAVMLTDEGVRKAEVTFKVANYADAENIELQHYVTQALKANFAMRRDKDYMVKDGEVIIVDEFTGRLMEGRRYSDGLHQAIEAKEGVKIARESKTLATITFQNYFRMYKKLSGMTGTALTEENEFREIYGLDVIVIPTHRPIARKDNPDLVFSTELGKIKAVASEVEKAHAKGQPVLVGTVSIEKSELVSSMLKKKGVPHQVLNAKFHEQEAEIISHAGEKGMVTIATNMAGRGTDIKLGEGVVELGGLKIIGTERHESRRIDNQLRGRSGRQGDPGESTFFISLEDDLMRIFGSEKIQGVVEKLGLQEEEAIESKMVSKAIENAQKKVEGNNFDIRKQLLGYDDVMNIQREVIYKQRSEVLEGEDVKEEILSMTKDIIADAVNTYVTGESEDYREEFLHLMVALQDICIAPGTVNLPSLENLSNEEIIESLFESARKFYEHKEEEFGAERLREVERVVLLRAVDTKWMNHIDNMDHLKQGIGLQSFKQIDPVQAYQMEGSEMFNDMIKAIKEETVRLLFHVRIEVAPERVRVAQETAAIHEESSSAAAPGPGQNQPGGPGGPSAGPVAPVRNLDKHGRNELCPCGSGKKFKNCCGREA</sequence>
<proteinExistence type="inferred from homology"/>
<evidence type="ECO:0000255" key="1">
    <source>
        <dbReference type="HAMAP-Rule" id="MF_01382"/>
    </source>
</evidence>
<evidence type="ECO:0000256" key="2">
    <source>
        <dbReference type="SAM" id="MobiDB-lite"/>
    </source>
</evidence>
<protein>
    <recommendedName>
        <fullName evidence="1">Protein translocase subunit SecA</fullName>
        <ecNumber evidence="1">7.4.2.8</ecNumber>
    </recommendedName>
</protein>
<accession>A6LQJ1</accession>
<gene>
    <name evidence="1" type="primary">secA</name>
    <name type="ordered locus">Cbei_0433</name>
</gene>
<comment type="function">
    <text evidence="1">Part of the Sec protein translocase complex. Interacts with the SecYEG preprotein conducting channel. Has a central role in coupling the hydrolysis of ATP to the transfer of proteins into and across the cell membrane, serving as an ATP-driven molecular motor driving the stepwise translocation of polypeptide chains across the membrane.</text>
</comment>
<comment type="catalytic activity">
    <reaction evidence="1">
        <text>ATP + H2O + cellular proteinSide 1 = ADP + phosphate + cellular proteinSide 2.</text>
        <dbReference type="EC" id="7.4.2.8"/>
    </reaction>
</comment>
<comment type="cofactor">
    <cofactor evidence="1">
        <name>Zn(2+)</name>
        <dbReference type="ChEBI" id="CHEBI:29105"/>
    </cofactor>
    <text evidence="1">May bind 1 zinc ion per subunit.</text>
</comment>
<comment type="subunit">
    <text evidence="1">Monomer and homodimer. Part of the essential Sec protein translocation apparatus which comprises SecA, SecYEG and auxiliary proteins SecDF. Other proteins may also be involved.</text>
</comment>
<comment type="subcellular location">
    <subcellularLocation>
        <location evidence="1">Cell membrane</location>
        <topology evidence="1">Peripheral membrane protein</topology>
        <orientation evidence="1">Cytoplasmic side</orientation>
    </subcellularLocation>
    <subcellularLocation>
        <location evidence="1">Cytoplasm</location>
    </subcellularLocation>
    <text evidence="1">Distribution is 50-50.</text>
</comment>
<comment type="similarity">
    <text evidence="1">Belongs to the SecA family.</text>
</comment>
<dbReference type="EC" id="7.4.2.8" evidence="1"/>
<dbReference type="EMBL" id="CP000721">
    <property type="protein sequence ID" value="ABR32621.1"/>
    <property type="molecule type" value="Genomic_DNA"/>
</dbReference>
<dbReference type="RefSeq" id="WP_011967782.1">
    <property type="nucleotide sequence ID" value="NC_009617.1"/>
</dbReference>
<dbReference type="SMR" id="A6LQJ1"/>
<dbReference type="KEGG" id="cbe:Cbei_0433"/>
<dbReference type="eggNOG" id="COG0653">
    <property type="taxonomic scope" value="Bacteria"/>
</dbReference>
<dbReference type="HOGENOM" id="CLU_005314_3_0_9"/>
<dbReference type="Proteomes" id="UP000000565">
    <property type="component" value="Chromosome"/>
</dbReference>
<dbReference type="GO" id="GO:0031522">
    <property type="term" value="C:cell envelope Sec protein transport complex"/>
    <property type="evidence" value="ECO:0007669"/>
    <property type="project" value="TreeGrafter"/>
</dbReference>
<dbReference type="GO" id="GO:0005829">
    <property type="term" value="C:cytosol"/>
    <property type="evidence" value="ECO:0007669"/>
    <property type="project" value="TreeGrafter"/>
</dbReference>
<dbReference type="GO" id="GO:0005886">
    <property type="term" value="C:plasma membrane"/>
    <property type="evidence" value="ECO:0007669"/>
    <property type="project" value="UniProtKB-SubCell"/>
</dbReference>
<dbReference type="GO" id="GO:0005524">
    <property type="term" value="F:ATP binding"/>
    <property type="evidence" value="ECO:0007669"/>
    <property type="project" value="UniProtKB-UniRule"/>
</dbReference>
<dbReference type="GO" id="GO:0046872">
    <property type="term" value="F:metal ion binding"/>
    <property type="evidence" value="ECO:0007669"/>
    <property type="project" value="UniProtKB-KW"/>
</dbReference>
<dbReference type="GO" id="GO:0008564">
    <property type="term" value="F:protein-exporting ATPase activity"/>
    <property type="evidence" value="ECO:0007669"/>
    <property type="project" value="UniProtKB-EC"/>
</dbReference>
<dbReference type="GO" id="GO:0065002">
    <property type="term" value="P:intracellular protein transmembrane transport"/>
    <property type="evidence" value="ECO:0007669"/>
    <property type="project" value="UniProtKB-UniRule"/>
</dbReference>
<dbReference type="GO" id="GO:0017038">
    <property type="term" value="P:protein import"/>
    <property type="evidence" value="ECO:0007669"/>
    <property type="project" value="InterPro"/>
</dbReference>
<dbReference type="GO" id="GO:0006605">
    <property type="term" value="P:protein targeting"/>
    <property type="evidence" value="ECO:0007669"/>
    <property type="project" value="UniProtKB-UniRule"/>
</dbReference>
<dbReference type="GO" id="GO:0043952">
    <property type="term" value="P:protein transport by the Sec complex"/>
    <property type="evidence" value="ECO:0007669"/>
    <property type="project" value="TreeGrafter"/>
</dbReference>
<dbReference type="CDD" id="cd17928">
    <property type="entry name" value="DEXDc_SecA"/>
    <property type="match status" value="1"/>
</dbReference>
<dbReference type="CDD" id="cd18803">
    <property type="entry name" value="SF2_C_secA"/>
    <property type="match status" value="1"/>
</dbReference>
<dbReference type="FunFam" id="1.10.3060.10:FF:000002">
    <property type="entry name" value="Preprotein translocase subunit SecA"/>
    <property type="match status" value="1"/>
</dbReference>
<dbReference type="FunFam" id="3.40.50.300:FF:000429">
    <property type="entry name" value="Preprotein translocase subunit SecA"/>
    <property type="match status" value="1"/>
</dbReference>
<dbReference type="FunFam" id="3.90.1440.10:FF:000001">
    <property type="entry name" value="Preprotein translocase subunit SecA"/>
    <property type="match status" value="1"/>
</dbReference>
<dbReference type="FunFam" id="3.40.50.300:FF:000334">
    <property type="entry name" value="Protein translocase subunit SecA"/>
    <property type="match status" value="1"/>
</dbReference>
<dbReference type="Gene3D" id="1.10.3060.10">
    <property type="entry name" value="Helical scaffold and wing domains of SecA"/>
    <property type="match status" value="1"/>
</dbReference>
<dbReference type="Gene3D" id="3.40.50.300">
    <property type="entry name" value="P-loop containing nucleotide triphosphate hydrolases"/>
    <property type="match status" value="3"/>
</dbReference>
<dbReference type="Gene3D" id="3.90.1440.10">
    <property type="entry name" value="SecA, preprotein cross-linking domain"/>
    <property type="match status" value="1"/>
</dbReference>
<dbReference type="HAMAP" id="MF_01382">
    <property type="entry name" value="SecA"/>
    <property type="match status" value="1"/>
</dbReference>
<dbReference type="InterPro" id="IPR014001">
    <property type="entry name" value="Helicase_ATP-bd"/>
</dbReference>
<dbReference type="InterPro" id="IPR001650">
    <property type="entry name" value="Helicase_C-like"/>
</dbReference>
<dbReference type="InterPro" id="IPR027417">
    <property type="entry name" value="P-loop_NTPase"/>
</dbReference>
<dbReference type="InterPro" id="IPR004027">
    <property type="entry name" value="SEC_C_motif"/>
</dbReference>
<dbReference type="InterPro" id="IPR000185">
    <property type="entry name" value="SecA"/>
</dbReference>
<dbReference type="InterPro" id="IPR020937">
    <property type="entry name" value="SecA_CS"/>
</dbReference>
<dbReference type="InterPro" id="IPR011115">
    <property type="entry name" value="SecA_DEAD"/>
</dbReference>
<dbReference type="InterPro" id="IPR014018">
    <property type="entry name" value="SecA_motor_DEAD"/>
</dbReference>
<dbReference type="InterPro" id="IPR011130">
    <property type="entry name" value="SecA_preprotein_X-link_dom"/>
</dbReference>
<dbReference type="InterPro" id="IPR044722">
    <property type="entry name" value="SecA_SF2_C"/>
</dbReference>
<dbReference type="InterPro" id="IPR011116">
    <property type="entry name" value="SecA_Wing/Scaffold"/>
</dbReference>
<dbReference type="InterPro" id="IPR036266">
    <property type="entry name" value="SecA_Wing/Scaffold_sf"/>
</dbReference>
<dbReference type="InterPro" id="IPR036670">
    <property type="entry name" value="SecA_X-link_sf"/>
</dbReference>
<dbReference type="NCBIfam" id="NF006630">
    <property type="entry name" value="PRK09200.1"/>
    <property type="match status" value="1"/>
</dbReference>
<dbReference type="NCBIfam" id="NF009538">
    <property type="entry name" value="PRK12904.1"/>
    <property type="match status" value="1"/>
</dbReference>
<dbReference type="NCBIfam" id="TIGR00963">
    <property type="entry name" value="secA"/>
    <property type="match status" value="1"/>
</dbReference>
<dbReference type="PANTHER" id="PTHR30612:SF0">
    <property type="entry name" value="CHLOROPLAST PROTEIN-TRANSPORTING ATPASE"/>
    <property type="match status" value="1"/>
</dbReference>
<dbReference type="PANTHER" id="PTHR30612">
    <property type="entry name" value="SECA INNER MEMBRANE COMPONENT OF SEC PROTEIN SECRETION SYSTEM"/>
    <property type="match status" value="1"/>
</dbReference>
<dbReference type="Pfam" id="PF21090">
    <property type="entry name" value="P-loop_SecA"/>
    <property type="match status" value="2"/>
</dbReference>
<dbReference type="Pfam" id="PF02810">
    <property type="entry name" value="SEC-C"/>
    <property type="match status" value="1"/>
</dbReference>
<dbReference type="Pfam" id="PF07517">
    <property type="entry name" value="SecA_DEAD"/>
    <property type="match status" value="1"/>
</dbReference>
<dbReference type="Pfam" id="PF01043">
    <property type="entry name" value="SecA_PP_bind"/>
    <property type="match status" value="1"/>
</dbReference>
<dbReference type="Pfam" id="PF07516">
    <property type="entry name" value="SecA_SW"/>
    <property type="match status" value="1"/>
</dbReference>
<dbReference type="PRINTS" id="PR00906">
    <property type="entry name" value="SECA"/>
</dbReference>
<dbReference type="SMART" id="SM00957">
    <property type="entry name" value="SecA_DEAD"/>
    <property type="match status" value="1"/>
</dbReference>
<dbReference type="SMART" id="SM00958">
    <property type="entry name" value="SecA_PP_bind"/>
    <property type="match status" value="1"/>
</dbReference>
<dbReference type="SUPFAM" id="SSF81886">
    <property type="entry name" value="Helical scaffold and wing domains of SecA"/>
    <property type="match status" value="1"/>
</dbReference>
<dbReference type="SUPFAM" id="SSF52540">
    <property type="entry name" value="P-loop containing nucleoside triphosphate hydrolases"/>
    <property type="match status" value="2"/>
</dbReference>
<dbReference type="SUPFAM" id="SSF81767">
    <property type="entry name" value="Pre-protein crosslinking domain of SecA"/>
    <property type="match status" value="1"/>
</dbReference>
<dbReference type="PROSITE" id="PS01312">
    <property type="entry name" value="SECA"/>
    <property type="match status" value="1"/>
</dbReference>
<dbReference type="PROSITE" id="PS51196">
    <property type="entry name" value="SECA_MOTOR_DEAD"/>
    <property type="match status" value="1"/>
</dbReference>
<feature type="chain" id="PRO_1000087311" description="Protein translocase subunit SecA">
    <location>
        <begin position="1"/>
        <end position="855"/>
    </location>
</feature>
<feature type="region of interest" description="Disordered" evidence="2">
    <location>
        <begin position="794"/>
        <end position="845"/>
    </location>
</feature>
<feature type="compositionally biased region" description="Low complexity" evidence="2">
    <location>
        <begin position="801"/>
        <end position="811"/>
    </location>
</feature>
<feature type="binding site" evidence="1">
    <location>
        <position position="85"/>
    </location>
    <ligand>
        <name>ATP</name>
        <dbReference type="ChEBI" id="CHEBI:30616"/>
    </ligand>
</feature>
<feature type="binding site" evidence="1">
    <location>
        <begin position="103"/>
        <end position="107"/>
    </location>
    <ligand>
        <name>ATP</name>
        <dbReference type="ChEBI" id="CHEBI:30616"/>
    </ligand>
</feature>
<feature type="binding site" evidence="1">
    <location>
        <position position="492"/>
    </location>
    <ligand>
        <name>ATP</name>
        <dbReference type="ChEBI" id="CHEBI:30616"/>
    </ligand>
</feature>
<feature type="binding site" evidence="1">
    <location>
        <position position="839"/>
    </location>
    <ligand>
        <name>Zn(2+)</name>
        <dbReference type="ChEBI" id="CHEBI:29105"/>
    </ligand>
</feature>
<feature type="binding site" evidence="1">
    <location>
        <position position="841"/>
    </location>
    <ligand>
        <name>Zn(2+)</name>
        <dbReference type="ChEBI" id="CHEBI:29105"/>
    </ligand>
</feature>
<feature type="binding site" evidence="1">
    <location>
        <position position="850"/>
    </location>
    <ligand>
        <name>Zn(2+)</name>
        <dbReference type="ChEBI" id="CHEBI:29105"/>
    </ligand>
</feature>
<feature type="binding site" evidence="1">
    <location>
        <position position="851"/>
    </location>
    <ligand>
        <name>Zn(2+)</name>
        <dbReference type="ChEBI" id="CHEBI:29105"/>
    </ligand>
</feature>